<evidence type="ECO:0000255" key="1">
    <source>
        <dbReference type="HAMAP-Rule" id="MF_01368"/>
    </source>
</evidence>
<evidence type="ECO:0000305" key="2"/>
<organism>
    <name type="scientific">Thermomicrobium roseum (strain ATCC 27502 / DSM 5159 / P-2)</name>
    <dbReference type="NCBI Taxonomy" id="309801"/>
    <lineage>
        <taxon>Bacteria</taxon>
        <taxon>Pseudomonadati</taxon>
        <taxon>Thermomicrobiota</taxon>
        <taxon>Thermomicrobia</taxon>
        <taxon>Thermomicrobiales</taxon>
        <taxon>Thermomicrobiaceae</taxon>
        <taxon>Thermomicrobium</taxon>
    </lineage>
</organism>
<accession>B9KZV9</accession>
<feature type="chain" id="PRO_1000184052" description="Large ribosomal subunit protein bL17">
    <location>
        <begin position="1"/>
        <end position="117"/>
    </location>
</feature>
<name>RL17_THERP</name>
<proteinExistence type="inferred from homology"/>
<dbReference type="EMBL" id="CP001275">
    <property type="protein sequence ID" value="ACM05598.1"/>
    <property type="molecule type" value="Genomic_DNA"/>
</dbReference>
<dbReference type="RefSeq" id="WP_015921920.1">
    <property type="nucleotide sequence ID" value="NC_011959.1"/>
</dbReference>
<dbReference type="SMR" id="B9KZV9"/>
<dbReference type="STRING" id="309801.trd_0956"/>
<dbReference type="KEGG" id="tro:trd_0956"/>
<dbReference type="eggNOG" id="COG0203">
    <property type="taxonomic scope" value="Bacteria"/>
</dbReference>
<dbReference type="HOGENOM" id="CLU_074407_2_0_0"/>
<dbReference type="OrthoDB" id="9809073at2"/>
<dbReference type="Proteomes" id="UP000000447">
    <property type="component" value="Chromosome"/>
</dbReference>
<dbReference type="GO" id="GO:0022625">
    <property type="term" value="C:cytosolic large ribosomal subunit"/>
    <property type="evidence" value="ECO:0007669"/>
    <property type="project" value="TreeGrafter"/>
</dbReference>
<dbReference type="GO" id="GO:0003735">
    <property type="term" value="F:structural constituent of ribosome"/>
    <property type="evidence" value="ECO:0007669"/>
    <property type="project" value="InterPro"/>
</dbReference>
<dbReference type="GO" id="GO:0006412">
    <property type="term" value="P:translation"/>
    <property type="evidence" value="ECO:0007669"/>
    <property type="project" value="UniProtKB-UniRule"/>
</dbReference>
<dbReference type="Gene3D" id="3.90.1030.10">
    <property type="entry name" value="Ribosomal protein L17"/>
    <property type="match status" value="1"/>
</dbReference>
<dbReference type="HAMAP" id="MF_01368">
    <property type="entry name" value="Ribosomal_bL17"/>
    <property type="match status" value="1"/>
</dbReference>
<dbReference type="InterPro" id="IPR000456">
    <property type="entry name" value="Ribosomal_bL17"/>
</dbReference>
<dbReference type="InterPro" id="IPR036373">
    <property type="entry name" value="Ribosomal_bL17_sf"/>
</dbReference>
<dbReference type="NCBIfam" id="TIGR00059">
    <property type="entry name" value="L17"/>
    <property type="match status" value="1"/>
</dbReference>
<dbReference type="PANTHER" id="PTHR14413:SF16">
    <property type="entry name" value="LARGE RIBOSOMAL SUBUNIT PROTEIN BL17M"/>
    <property type="match status" value="1"/>
</dbReference>
<dbReference type="PANTHER" id="PTHR14413">
    <property type="entry name" value="RIBOSOMAL PROTEIN L17"/>
    <property type="match status" value="1"/>
</dbReference>
<dbReference type="Pfam" id="PF01196">
    <property type="entry name" value="Ribosomal_L17"/>
    <property type="match status" value="1"/>
</dbReference>
<dbReference type="SUPFAM" id="SSF64263">
    <property type="entry name" value="Prokaryotic ribosomal protein L17"/>
    <property type="match status" value="1"/>
</dbReference>
<gene>
    <name evidence="1" type="primary">rplQ</name>
    <name type="ordered locus">trd_0956</name>
</gene>
<reference key="1">
    <citation type="journal article" date="2009" name="PLoS ONE">
        <title>Complete genome sequence of the aerobic CO-oxidizing thermophile Thermomicrobium roseum.</title>
        <authorList>
            <person name="Wu D."/>
            <person name="Raymond J."/>
            <person name="Wu M."/>
            <person name="Chatterji S."/>
            <person name="Ren Q."/>
            <person name="Graham J.E."/>
            <person name="Bryant D.A."/>
            <person name="Robb F."/>
            <person name="Colman A."/>
            <person name="Tallon L.J."/>
            <person name="Badger J.H."/>
            <person name="Madupu R."/>
            <person name="Ward N.L."/>
            <person name="Eisen J.A."/>
        </authorList>
    </citation>
    <scope>NUCLEOTIDE SEQUENCE [LARGE SCALE GENOMIC DNA]</scope>
    <source>
        <strain>ATCC 27502 / DSM 5159 / P-2</strain>
    </source>
</reference>
<comment type="subunit">
    <text evidence="1">Part of the 50S ribosomal subunit. Contacts protein L32.</text>
</comment>
<comment type="similarity">
    <text evidence="1">Belongs to the bacterial ribosomal protein bL17 family.</text>
</comment>
<protein>
    <recommendedName>
        <fullName evidence="1">Large ribosomal subunit protein bL17</fullName>
    </recommendedName>
    <alternativeName>
        <fullName evidence="2">50S ribosomal protein L17</fullName>
    </alternativeName>
</protein>
<sequence>MRHRKAGRKFGRRTNPRKNLFRNLAVSLILHERMTTTLAKAKTIQPIVERLVTLAREDTDHHRRLAWAQLGDQRAVAKLFDVIAPRFVGQPGGYTRIYRIGQRRGDGAPLALIEFVA</sequence>
<keyword id="KW-1185">Reference proteome</keyword>
<keyword id="KW-0687">Ribonucleoprotein</keyword>
<keyword id="KW-0689">Ribosomal protein</keyword>